<comment type="function">
    <text evidence="1">Binds as a heterodimer with protein bS6 to the central domain of the 16S rRNA, where it helps stabilize the platform of the 30S subunit.</text>
</comment>
<comment type="subunit">
    <text evidence="1">Part of the 30S ribosomal subunit. Forms a tight heterodimer with protein bS6.</text>
</comment>
<comment type="similarity">
    <text evidence="1">Belongs to the bacterial ribosomal protein bS18 family.</text>
</comment>
<keyword id="KW-1185">Reference proteome</keyword>
<keyword id="KW-0687">Ribonucleoprotein</keyword>
<keyword id="KW-0689">Ribosomal protein</keyword>
<keyword id="KW-0694">RNA-binding</keyword>
<keyword id="KW-0699">rRNA-binding</keyword>
<proteinExistence type="inferred from homology"/>
<name>RS18_NOSS1</name>
<evidence type="ECO:0000255" key="1">
    <source>
        <dbReference type="HAMAP-Rule" id="MF_00270"/>
    </source>
</evidence>
<evidence type="ECO:0000305" key="2"/>
<feature type="chain" id="PRO_0000111106" description="Small ribosomal subunit protein bS18">
    <location>
        <begin position="1"/>
        <end position="71"/>
    </location>
</feature>
<accession>Q8YNW0</accession>
<gene>
    <name evidence="1" type="primary">rpsR</name>
    <name evidence="1" type="synonym">rps18</name>
    <name type="ordered locus">asl4451</name>
</gene>
<organism>
    <name type="scientific">Nostoc sp. (strain PCC 7120 / SAG 25.82 / UTEX 2576)</name>
    <dbReference type="NCBI Taxonomy" id="103690"/>
    <lineage>
        <taxon>Bacteria</taxon>
        <taxon>Bacillati</taxon>
        <taxon>Cyanobacteriota</taxon>
        <taxon>Cyanophyceae</taxon>
        <taxon>Nostocales</taxon>
        <taxon>Nostocaceae</taxon>
        <taxon>Nostoc</taxon>
    </lineage>
</organism>
<sequence length="71" mass="8282">MSYYRRRLSPIKPGEPIDYKDVDLLRKFITERGKILPRRITGLTAKQQRELTLAIKRSRLVALLPFINAEG</sequence>
<protein>
    <recommendedName>
        <fullName evidence="1">Small ribosomal subunit protein bS18</fullName>
    </recommendedName>
    <alternativeName>
        <fullName evidence="2">30S ribosomal protein S18</fullName>
    </alternativeName>
</protein>
<dbReference type="EMBL" id="BA000019">
    <property type="protein sequence ID" value="BAB76150.1"/>
    <property type="molecule type" value="Genomic_DNA"/>
</dbReference>
<dbReference type="PIR" id="AC2362">
    <property type="entry name" value="AC2362"/>
</dbReference>
<dbReference type="RefSeq" id="WP_010998584.1">
    <property type="nucleotide sequence ID" value="NZ_RSCN01000054.1"/>
</dbReference>
<dbReference type="SMR" id="Q8YNW0"/>
<dbReference type="STRING" id="103690.gene:10496500"/>
<dbReference type="GeneID" id="58723989"/>
<dbReference type="KEGG" id="ana:asl4451"/>
<dbReference type="eggNOG" id="COG0238">
    <property type="taxonomic scope" value="Bacteria"/>
</dbReference>
<dbReference type="OrthoDB" id="9812008at2"/>
<dbReference type="Proteomes" id="UP000002483">
    <property type="component" value="Chromosome"/>
</dbReference>
<dbReference type="GO" id="GO:0022627">
    <property type="term" value="C:cytosolic small ribosomal subunit"/>
    <property type="evidence" value="ECO:0007669"/>
    <property type="project" value="TreeGrafter"/>
</dbReference>
<dbReference type="GO" id="GO:0070181">
    <property type="term" value="F:small ribosomal subunit rRNA binding"/>
    <property type="evidence" value="ECO:0007669"/>
    <property type="project" value="TreeGrafter"/>
</dbReference>
<dbReference type="GO" id="GO:0003735">
    <property type="term" value="F:structural constituent of ribosome"/>
    <property type="evidence" value="ECO:0007669"/>
    <property type="project" value="InterPro"/>
</dbReference>
<dbReference type="GO" id="GO:0006412">
    <property type="term" value="P:translation"/>
    <property type="evidence" value="ECO:0007669"/>
    <property type="project" value="UniProtKB-UniRule"/>
</dbReference>
<dbReference type="FunFam" id="4.10.640.10:FF:000002">
    <property type="entry name" value="30S ribosomal protein S18, chloroplastic"/>
    <property type="match status" value="1"/>
</dbReference>
<dbReference type="Gene3D" id="4.10.640.10">
    <property type="entry name" value="Ribosomal protein S18"/>
    <property type="match status" value="1"/>
</dbReference>
<dbReference type="HAMAP" id="MF_00270">
    <property type="entry name" value="Ribosomal_bS18"/>
    <property type="match status" value="1"/>
</dbReference>
<dbReference type="InterPro" id="IPR001648">
    <property type="entry name" value="Ribosomal_bS18"/>
</dbReference>
<dbReference type="InterPro" id="IPR018275">
    <property type="entry name" value="Ribosomal_bS18_CS"/>
</dbReference>
<dbReference type="InterPro" id="IPR036870">
    <property type="entry name" value="Ribosomal_bS18_sf"/>
</dbReference>
<dbReference type="NCBIfam" id="TIGR00165">
    <property type="entry name" value="S18"/>
    <property type="match status" value="1"/>
</dbReference>
<dbReference type="PANTHER" id="PTHR13479">
    <property type="entry name" value="30S RIBOSOMAL PROTEIN S18"/>
    <property type="match status" value="1"/>
</dbReference>
<dbReference type="PANTHER" id="PTHR13479:SF40">
    <property type="entry name" value="SMALL RIBOSOMAL SUBUNIT PROTEIN BS18M"/>
    <property type="match status" value="1"/>
</dbReference>
<dbReference type="Pfam" id="PF01084">
    <property type="entry name" value="Ribosomal_S18"/>
    <property type="match status" value="1"/>
</dbReference>
<dbReference type="PRINTS" id="PR00974">
    <property type="entry name" value="RIBOSOMALS18"/>
</dbReference>
<dbReference type="SUPFAM" id="SSF46911">
    <property type="entry name" value="Ribosomal protein S18"/>
    <property type="match status" value="1"/>
</dbReference>
<dbReference type="PROSITE" id="PS00057">
    <property type="entry name" value="RIBOSOMAL_S18"/>
    <property type="match status" value="1"/>
</dbReference>
<reference key="1">
    <citation type="journal article" date="2001" name="DNA Res.">
        <title>Complete genomic sequence of the filamentous nitrogen-fixing cyanobacterium Anabaena sp. strain PCC 7120.</title>
        <authorList>
            <person name="Kaneko T."/>
            <person name="Nakamura Y."/>
            <person name="Wolk C.P."/>
            <person name="Kuritz T."/>
            <person name="Sasamoto S."/>
            <person name="Watanabe A."/>
            <person name="Iriguchi M."/>
            <person name="Ishikawa A."/>
            <person name="Kawashima K."/>
            <person name="Kimura T."/>
            <person name="Kishida Y."/>
            <person name="Kohara M."/>
            <person name="Matsumoto M."/>
            <person name="Matsuno A."/>
            <person name="Muraki A."/>
            <person name="Nakazaki N."/>
            <person name="Shimpo S."/>
            <person name="Sugimoto M."/>
            <person name="Takazawa M."/>
            <person name="Yamada M."/>
            <person name="Yasuda M."/>
            <person name="Tabata S."/>
        </authorList>
    </citation>
    <scope>NUCLEOTIDE SEQUENCE [LARGE SCALE GENOMIC DNA]</scope>
    <source>
        <strain>PCC 7120 / SAG 25.82 / UTEX 2576</strain>
    </source>
</reference>